<feature type="chain" id="PRO_1000138507" description="Orotidine 5'-phosphate decarboxylase">
    <location>
        <begin position="1"/>
        <end position="230"/>
    </location>
</feature>
<feature type="active site" description="Proton donor" evidence="1">
    <location>
        <position position="61"/>
    </location>
</feature>
<feature type="binding site" evidence="1">
    <location>
        <position position="10"/>
    </location>
    <ligand>
        <name>substrate</name>
    </ligand>
</feature>
<feature type="binding site" evidence="1">
    <location>
        <position position="32"/>
    </location>
    <ligand>
        <name>substrate</name>
    </ligand>
</feature>
<feature type="binding site" evidence="1">
    <location>
        <begin position="59"/>
        <end position="68"/>
    </location>
    <ligand>
        <name>substrate</name>
    </ligand>
</feature>
<feature type="binding site" evidence="1">
    <location>
        <position position="119"/>
    </location>
    <ligand>
        <name>substrate</name>
    </ligand>
</feature>
<feature type="binding site" evidence="1">
    <location>
        <position position="180"/>
    </location>
    <ligand>
        <name>substrate</name>
    </ligand>
</feature>
<feature type="binding site" evidence="1">
    <location>
        <position position="189"/>
    </location>
    <ligand>
        <name>substrate</name>
    </ligand>
</feature>
<feature type="binding site" evidence="1">
    <location>
        <position position="209"/>
    </location>
    <ligand>
        <name>substrate</name>
    </ligand>
</feature>
<feature type="binding site" evidence="1">
    <location>
        <position position="210"/>
    </location>
    <ligand>
        <name>substrate</name>
    </ligand>
</feature>
<reference key="1">
    <citation type="journal article" date="2008" name="PLoS ONE">
        <title>Genome biology of Actinobacillus pleuropneumoniae JL03, an isolate of serotype 3 prevalent in China.</title>
        <authorList>
            <person name="Xu Z."/>
            <person name="Zhou Y."/>
            <person name="Li L."/>
            <person name="Zhou R."/>
            <person name="Xiao S."/>
            <person name="Wan Y."/>
            <person name="Zhang S."/>
            <person name="Wang K."/>
            <person name="Li W."/>
            <person name="Li L."/>
            <person name="Jin H."/>
            <person name="Kang M."/>
            <person name="Dalai B."/>
            <person name="Li T."/>
            <person name="Liu L."/>
            <person name="Cheng Y."/>
            <person name="Zhang L."/>
            <person name="Xu T."/>
            <person name="Zheng H."/>
            <person name="Pu S."/>
            <person name="Wang B."/>
            <person name="Gu W."/>
            <person name="Zhang X.L."/>
            <person name="Zhu G.-F."/>
            <person name="Wang S."/>
            <person name="Zhao G.-P."/>
            <person name="Chen H."/>
        </authorList>
    </citation>
    <scope>NUCLEOTIDE SEQUENCE [LARGE SCALE GENOMIC DNA]</scope>
    <source>
        <strain>JL03</strain>
    </source>
</reference>
<gene>
    <name evidence="1" type="primary">pyrF</name>
    <name type="ordered locus">APJL_0738</name>
</gene>
<accession>B0BP16</accession>
<evidence type="ECO:0000255" key="1">
    <source>
        <dbReference type="HAMAP-Rule" id="MF_01200"/>
    </source>
</evidence>
<name>PYRF_ACTPJ</name>
<keyword id="KW-0210">Decarboxylase</keyword>
<keyword id="KW-0456">Lyase</keyword>
<keyword id="KW-0665">Pyrimidine biosynthesis</keyword>
<dbReference type="EC" id="4.1.1.23" evidence="1"/>
<dbReference type="EMBL" id="CP000687">
    <property type="protein sequence ID" value="ABY69301.1"/>
    <property type="molecule type" value="Genomic_DNA"/>
</dbReference>
<dbReference type="RefSeq" id="WP_005597131.1">
    <property type="nucleotide sequence ID" value="NC_010278.1"/>
</dbReference>
<dbReference type="SMR" id="B0BP16"/>
<dbReference type="GeneID" id="48598917"/>
<dbReference type="KEGG" id="apj:APJL_0738"/>
<dbReference type="HOGENOM" id="CLU_067069_0_0_6"/>
<dbReference type="UniPathway" id="UPA00070">
    <property type="reaction ID" value="UER00120"/>
</dbReference>
<dbReference type="Proteomes" id="UP000008547">
    <property type="component" value="Chromosome"/>
</dbReference>
<dbReference type="GO" id="GO:0005829">
    <property type="term" value="C:cytosol"/>
    <property type="evidence" value="ECO:0007669"/>
    <property type="project" value="TreeGrafter"/>
</dbReference>
<dbReference type="GO" id="GO:0004590">
    <property type="term" value="F:orotidine-5'-phosphate decarboxylase activity"/>
    <property type="evidence" value="ECO:0007669"/>
    <property type="project" value="UniProtKB-UniRule"/>
</dbReference>
<dbReference type="GO" id="GO:0006207">
    <property type="term" value="P:'de novo' pyrimidine nucleobase biosynthetic process"/>
    <property type="evidence" value="ECO:0007669"/>
    <property type="project" value="InterPro"/>
</dbReference>
<dbReference type="GO" id="GO:0044205">
    <property type="term" value="P:'de novo' UMP biosynthetic process"/>
    <property type="evidence" value="ECO:0007669"/>
    <property type="project" value="UniProtKB-UniRule"/>
</dbReference>
<dbReference type="CDD" id="cd04725">
    <property type="entry name" value="OMP_decarboxylase_like"/>
    <property type="match status" value="1"/>
</dbReference>
<dbReference type="FunFam" id="3.20.20.70:FF:000015">
    <property type="entry name" value="Orotidine 5'-phosphate decarboxylase"/>
    <property type="match status" value="1"/>
</dbReference>
<dbReference type="Gene3D" id="3.20.20.70">
    <property type="entry name" value="Aldolase class I"/>
    <property type="match status" value="1"/>
</dbReference>
<dbReference type="HAMAP" id="MF_01200_B">
    <property type="entry name" value="OMPdecase_type1_B"/>
    <property type="match status" value="1"/>
</dbReference>
<dbReference type="InterPro" id="IPR013785">
    <property type="entry name" value="Aldolase_TIM"/>
</dbReference>
<dbReference type="InterPro" id="IPR014732">
    <property type="entry name" value="OMPdecase"/>
</dbReference>
<dbReference type="InterPro" id="IPR018089">
    <property type="entry name" value="OMPdecase_AS"/>
</dbReference>
<dbReference type="InterPro" id="IPR047596">
    <property type="entry name" value="OMPdecase_bac"/>
</dbReference>
<dbReference type="InterPro" id="IPR001754">
    <property type="entry name" value="OMPdeCOase_dom"/>
</dbReference>
<dbReference type="InterPro" id="IPR011060">
    <property type="entry name" value="RibuloseP-bd_barrel"/>
</dbReference>
<dbReference type="NCBIfam" id="NF001273">
    <property type="entry name" value="PRK00230.1"/>
    <property type="match status" value="1"/>
</dbReference>
<dbReference type="NCBIfam" id="TIGR01740">
    <property type="entry name" value="pyrF"/>
    <property type="match status" value="1"/>
</dbReference>
<dbReference type="PANTHER" id="PTHR32119">
    <property type="entry name" value="OROTIDINE 5'-PHOSPHATE DECARBOXYLASE"/>
    <property type="match status" value="1"/>
</dbReference>
<dbReference type="PANTHER" id="PTHR32119:SF2">
    <property type="entry name" value="OROTIDINE 5'-PHOSPHATE DECARBOXYLASE"/>
    <property type="match status" value="1"/>
</dbReference>
<dbReference type="Pfam" id="PF00215">
    <property type="entry name" value="OMPdecase"/>
    <property type="match status" value="1"/>
</dbReference>
<dbReference type="SMART" id="SM00934">
    <property type="entry name" value="OMPdecase"/>
    <property type="match status" value="1"/>
</dbReference>
<dbReference type="SUPFAM" id="SSF51366">
    <property type="entry name" value="Ribulose-phoshate binding barrel"/>
    <property type="match status" value="1"/>
</dbReference>
<dbReference type="PROSITE" id="PS00156">
    <property type="entry name" value="OMPDECASE"/>
    <property type="match status" value="1"/>
</dbReference>
<organism>
    <name type="scientific">Actinobacillus pleuropneumoniae serotype 3 (strain JL03)</name>
    <dbReference type="NCBI Taxonomy" id="434271"/>
    <lineage>
        <taxon>Bacteria</taxon>
        <taxon>Pseudomonadati</taxon>
        <taxon>Pseudomonadota</taxon>
        <taxon>Gammaproteobacteria</taxon>
        <taxon>Pasteurellales</taxon>
        <taxon>Pasteurellaceae</taxon>
        <taxon>Actinobacillus</taxon>
    </lineage>
</organism>
<comment type="function">
    <text evidence="1">Catalyzes the decarboxylation of orotidine 5'-monophosphate (OMP) to uridine 5'-monophosphate (UMP).</text>
</comment>
<comment type="catalytic activity">
    <reaction evidence="1">
        <text>orotidine 5'-phosphate + H(+) = UMP + CO2</text>
        <dbReference type="Rhea" id="RHEA:11596"/>
        <dbReference type="ChEBI" id="CHEBI:15378"/>
        <dbReference type="ChEBI" id="CHEBI:16526"/>
        <dbReference type="ChEBI" id="CHEBI:57538"/>
        <dbReference type="ChEBI" id="CHEBI:57865"/>
        <dbReference type="EC" id="4.1.1.23"/>
    </reaction>
</comment>
<comment type="pathway">
    <text evidence="1">Pyrimidine metabolism; UMP biosynthesis via de novo pathway; UMP from orotate: step 2/2.</text>
</comment>
<comment type="subunit">
    <text evidence="1">Homodimer.</text>
</comment>
<comment type="similarity">
    <text evidence="1">Belongs to the OMP decarboxylase family. Type 1 subfamily.</text>
</comment>
<proteinExistence type="inferred from homology"/>
<protein>
    <recommendedName>
        <fullName evidence="1">Orotidine 5'-phosphate decarboxylase</fullName>
        <ecNumber evidence="1">4.1.1.23</ecNumber>
    </recommendedName>
    <alternativeName>
        <fullName evidence="1">OMP decarboxylase</fullName>
        <shortName evidence="1">OMPDCase</shortName>
        <shortName evidence="1">OMPdecase</shortName>
    </alternativeName>
</protein>
<sequence>MDNKIIVALDYETEYEALSFVDQVDPSLCRVKVGKEMFTTLGTNFVKQLHERKFDVFLDLKYHDIPNTVARAVRSAADLGVWMVDLHASGGLTMMEEAKKILEPYGKDAPLLIAVTVLTSMEDLDLLQIGINASPMEQVIRLAHLAQRAGLDGVVCSPQEVEVLRTHCGKDFKLVTPGIRPEGSDVGDQRRIMTPKQAIETGSDYLVIGRPITQAQDPLSVLKSINASIR</sequence>